<protein>
    <recommendedName>
        <fullName evidence="1">Phenylalanine--tRNA ligase beta subunit</fullName>
        <ecNumber evidence="1">6.1.1.20</ecNumber>
    </recommendedName>
    <alternativeName>
        <fullName evidence="1">Phenylalanyl-tRNA synthetase beta subunit</fullName>
        <shortName evidence="1">PheRS</shortName>
    </alternativeName>
</protein>
<keyword id="KW-0030">Aminoacyl-tRNA synthetase</keyword>
<keyword id="KW-0067">ATP-binding</keyword>
<keyword id="KW-0963">Cytoplasm</keyword>
<keyword id="KW-0436">Ligase</keyword>
<keyword id="KW-0460">Magnesium</keyword>
<keyword id="KW-0479">Metal-binding</keyword>
<keyword id="KW-0547">Nucleotide-binding</keyword>
<keyword id="KW-0648">Protein biosynthesis</keyword>
<keyword id="KW-1185">Reference proteome</keyword>
<feature type="chain" id="PRO_1000204848" description="Phenylalanine--tRNA ligase beta subunit">
    <location>
        <begin position="1"/>
        <end position="568"/>
    </location>
</feature>
<feature type="domain" description="B5" evidence="1">
    <location>
        <begin position="278"/>
        <end position="353"/>
    </location>
</feature>
<feature type="binding site" evidence="1">
    <location>
        <position position="331"/>
    </location>
    <ligand>
        <name>Mg(2+)</name>
        <dbReference type="ChEBI" id="CHEBI:18420"/>
        <note>shared with alpha subunit</note>
    </ligand>
</feature>
<feature type="binding site" evidence="1">
    <location>
        <position position="337"/>
    </location>
    <ligand>
        <name>Mg(2+)</name>
        <dbReference type="ChEBI" id="CHEBI:18420"/>
        <note>shared with alpha subunit</note>
    </ligand>
</feature>
<feature type="binding site" evidence="1">
    <location>
        <position position="340"/>
    </location>
    <ligand>
        <name>Mg(2+)</name>
        <dbReference type="ChEBI" id="CHEBI:18420"/>
        <note>shared with alpha subunit</note>
    </ligand>
</feature>
<feature type="binding site" evidence="1">
    <location>
        <position position="341"/>
    </location>
    <ligand>
        <name>Mg(2+)</name>
        <dbReference type="ChEBI" id="CHEBI:18420"/>
        <note>shared with alpha subunit</note>
    </ligand>
</feature>
<sequence>MPKFDVSKRDLERLVGKEFTVEEWEDLFLYAKCELDDVWEENGEIYFKADSKDTNRPDLWSAEGIARQIRWALGFRRGLPEYEVEKSDVTVYVDEKLKDIRPYGVYAIVECLKLDEEALKQMINLQEKVALTFGRRRREVAIGIFDFDKVKPPIYYRAAEKTEKFVPLGFEEELTLEEILEKHEKGREYGHLIKDKPYYPLLVDSEGKVLSMPPIINSETTGRVTTETRNVFVDVTGWDLNKVMLALNVVVTALAERGGRIKSVKVVYPDFEIETPNLTPKSFEVELDYIRKLAGLDLSDGEIKDLLERMMYDVTLEDGKAKLLYPAFRDDIMHARDVLEDVLIAYGYNEIEPEEPKLAVQGRGDKFIEFEDAVRELMVGFGLQEVMTFNLTNREAQYGKMNLEYGRDYFNNPPAELVEIENPISPKWSALRNWLLPSLLDFLSQNTHEEYPQRLFEVGKATLIDESRETKTVSESKLAVVLAQPRVTFTDTKEILDSVMRHLGFEYELEEVEHPSFIPGRVGKVIVKGKAIGVIGEIHPSVLEKWGIEMPVAGFELFLRPLYTEPYL</sequence>
<dbReference type="EC" id="6.1.1.20" evidence="1"/>
<dbReference type="EMBL" id="CP001398">
    <property type="protein sequence ID" value="ACS33652.1"/>
    <property type="molecule type" value="Genomic_DNA"/>
</dbReference>
<dbReference type="RefSeq" id="WP_015858765.1">
    <property type="nucleotide sequence ID" value="NC_012804.1"/>
</dbReference>
<dbReference type="SMR" id="C5A5Z0"/>
<dbReference type="STRING" id="593117.TGAM_1150"/>
<dbReference type="PaxDb" id="593117-TGAM_1150"/>
<dbReference type="GeneID" id="7988537"/>
<dbReference type="KEGG" id="tga:TGAM_1150"/>
<dbReference type="PATRIC" id="fig|593117.10.peg.1150"/>
<dbReference type="eggNOG" id="arCOG00412">
    <property type="taxonomic scope" value="Archaea"/>
</dbReference>
<dbReference type="HOGENOM" id="CLU_020279_3_0_2"/>
<dbReference type="OrthoDB" id="10073at2157"/>
<dbReference type="Proteomes" id="UP000001488">
    <property type="component" value="Chromosome"/>
</dbReference>
<dbReference type="GO" id="GO:0009328">
    <property type="term" value="C:phenylalanine-tRNA ligase complex"/>
    <property type="evidence" value="ECO:0007669"/>
    <property type="project" value="TreeGrafter"/>
</dbReference>
<dbReference type="GO" id="GO:0005524">
    <property type="term" value="F:ATP binding"/>
    <property type="evidence" value="ECO:0007669"/>
    <property type="project" value="UniProtKB-UniRule"/>
</dbReference>
<dbReference type="GO" id="GO:0000287">
    <property type="term" value="F:magnesium ion binding"/>
    <property type="evidence" value="ECO:0007669"/>
    <property type="project" value="InterPro"/>
</dbReference>
<dbReference type="GO" id="GO:0004826">
    <property type="term" value="F:phenylalanine-tRNA ligase activity"/>
    <property type="evidence" value="ECO:0007669"/>
    <property type="project" value="UniProtKB-UniRule"/>
</dbReference>
<dbReference type="GO" id="GO:0003723">
    <property type="term" value="F:RNA binding"/>
    <property type="evidence" value="ECO:0007669"/>
    <property type="project" value="InterPro"/>
</dbReference>
<dbReference type="GO" id="GO:0006432">
    <property type="term" value="P:phenylalanyl-tRNA aminoacylation"/>
    <property type="evidence" value="ECO:0007669"/>
    <property type="project" value="UniProtKB-UniRule"/>
</dbReference>
<dbReference type="CDD" id="cd00769">
    <property type="entry name" value="PheRS_beta_core"/>
    <property type="match status" value="1"/>
</dbReference>
<dbReference type="FunFam" id="3.30.56.10:FF:000011">
    <property type="entry name" value="Phenylalanine--tRNA ligase beta subunit"/>
    <property type="match status" value="1"/>
</dbReference>
<dbReference type="FunFam" id="3.30.930.10:FF:000132">
    <property type="entry name" value="Phenylalanine--tRNA ligase beta subunit"/>
    <property type="match status" value="1"/>
</dbReference>
<dbReference type="FunFam" id="3.50.40.10:FF:000003">
    <property type="entry name" value="Phenylalanine--tRNA ligase beta subunit"/>
    <property type="match status" value="1"/>
</dbReference>
<dbReference type="Gene3D" id="3.30.56.10">
    <property type="match status" value="2"/>
</dbReference>
<dbReference type="Gene3D" id="3.30.930.10">
    <property type="entry name" value="Bira Bifunctional Protein, Domain 2"/>
    <property type="match status" value="1"/>
</dbReference>
<dbReference type="Gene3D" id="3.50.40.10">
    <property type="entry name" value="Phenylalanyl-trna Synthetase, Chain B, domain 3"/>
    <property type="match status" value="1"/>
</dbReference>
<dbReference type="HAMAP" id="MF_00284">
    <property type="entry name" value="Phe_tRNA_synth_beta2"/>
    <property type="match status" value="1"/>
</dbReference>
<dbReference type="InterPro" id="IPR045864">
    <property type="entry name" value="aa-tRNA-synth_II/BPL/LPL"/>
</dbReference>
<dbReference type="InterPro" id="IPR005146">
    <property type="entry name" value="B3/B4_tRNA-bd"/>
</dbReference>
<dbReference type="InterPro" id="IPR009061">
    <property type="entry name" value="DNA-bd_dom_put_sf"/>
</dbReference>
<dbReference type="InterPro" id="IPR045060">
    <property type="entry name" value="Phe-tRNA-ligase_IIc_bsu"/>
</dbReference>
<dbReference type="InterPro" id="IPR004531">
    <property type="entry name" value="Phe-tRNA-synth_IIc_bsu_arc_euk"/>
</dbReference>
<dbReference type="InterPro" id="IPR020825">
    <property type="entry name" value="Phe-tRNA_synthase-like_B3/B4"/>
</dbReference>
<dbReference type="InterPro" id="IPR022918">
    <property type="entry name" value="Phe_tRNA_ligase_beta2_arc"/>
</dbReference>
<dbReference type="InterPro" id="IPR041616">
    <property type="entry name" value="PheRS_beta_core"/>
</dbReference>
<dbReference type="InterPro" id="IPR005147">
    <property type="entry name" value="tRNA_synthase_B5-dom"/>
</dbReference>
<dbReference type="NCBIfam" id="TIGR00471">
    <property type="entry name" value="pheT_arch"/>
    <property type="match status" value="1"/>
</dbReference>
<dbReference type="PANTHER" id="PTHR10947:SF0">
    <property type="entry name" value="PHENYLALANINE--TRNA LIGASE BETA SUBUNIT"/>
    <property type="match status" value="1"/>
</dbReference>
<dbReference type="PANTHER" id="PTHR10947">
    <property type="entry name" value="PHENYLALANYL-TRNA SYNTHETASE BETA CHAIN AND LEUCINE-RICH REPEAT-CONTAINING PROTEIN 47"/>
    <property type="match status" value="1"/>
</dbReference>
<dbReference type="Pfam" id="PF03483">
    <property type="entry name" value="B3_4"/>
    <property type="match status" value="1"/>
</dbReference>
<dbReference type="Pfam" id="PF03484">
    <property type="entry name" value="B5"/>
    <property type="match status" value="1"/>
</dbReference>
<dbReference type="Pfam" id="PF17759">
    <property type="entry name" value="tRNA_synthFbeta"/>
    <property type="match status" value="1"/>
</dbReference>
<dbReference type="SMART" id="SM00873">
    <property type="entry name" value="B3_4"/>
    <property type="match status" value="1"/>
</dbReference>
<dbReference type="SMART" id="SM00874">
    <property type="entry name" value="B5"/>
    <property type="match status" value="1"/>
</dbReference>
<dbReference type="SUPFAM" id="SSF55681">
    <property type="entry name" value="Class II aaRS and biotin synthetases"/>
    <property type="match status" value="1"/>
</dbReference>
<dbReference type="SUPFAM" id="SSF56037">
    <property type="entry name" value="PheT/TilS domain"/>
    <property type="match status" value="1"/>
</dbReference>
<dbReference type="SUPFAM" id="SSF46955">
    <property type="entry name" value="Putative DNA-binding domain"/>
    <property type="match status" value="2"/>
</dbReference>
<dbReference type="PROSITE" id="PS51483">
    <property type="entry name" value="B5"/>
    <property type="match status" value="1"/>
</dbReference>
<name>SYFB_THEGJ</name>
<reference key="1">
    <citation type="journal article" date="2007" name="Genome Biol.">
        <title>Genome analysis and genome-wide proteomics of Thermococcus gammatolerans, the most radioresistant organism known amongst the Archaea.</title>
        <authorList>
            <person name="Zivanovic Y."/>
            <person name="Armengaud J."/>
            <person name="Lagorce A."/>
            <person name="Leplat C."/>
            <person name="Guerin P."/>
            <person name="Dutertre M."/>
            <person name="Anthouard V."/>
            <person name="Forterre P."/>
            <person name="Wincker P."/>
            <person name="Confalonieri F."/>
        </authorList>
    </citation>
    <scope>NUCLEOTIDE SEQUENCE [LARGE SCALE GENOMIC DNA]</scope>
    <source>
        <strain>DSM 15229 / JCM 11827 / EJ3</strain>
    </source>
</reference>
<organism>
    <name type="scientific">Thermococcus gammatolerans (strain DSM 15229 / JCM 11827 / EJ3)</name>
    <dbReference type="NCBI Taxonomy" id="593117"/>
    <lineage>
        <taxon>Archaea</taxon>
        <taxon>Methanobacteriati</taxon>
        <taxon>Methanobacteriota</taxon>
        <taxon>Thermococci</taxon>
        <taxon>Thermococcales</taxon>
        <taxon>Thermococcaceae</taxon>
        <taxon>Thermococcus</taxon>
    </lineage>
</organism>
<evidence type="ECO:0000255" key="1">
    <source>
        <dbReference type="HAMAP-Rule" id="MF_00284"/>
    </source>
</evidence>
<gene>
    <name evidence="1" type="primary">pheT</name>
    <name type="ordered locus">TGAM_1150</name>
</gene>
<comment type="catalytic activity">
    <reaction evidence="1">
        <text>tRNA(Phe) + L-phenylalanine + ATP = L-phenylalanyl-tRNA(Phe) + AMP + diphosphate + H(+)</text>
        <dbReference type="Rhea" id="RHEA:19413"/>
        <dbReference type="Rhea" id="RHEA-COMP:9668"/>
        <dbReference type="Rhea" id="RHEA-COMP:9699"/>
        <dbReference type="ChEBI" id="CHEBI:15378"/>
        <dbReference type="ChEBI" id="CHEBI:30616"/>
        <dbReference type="ChEBI" id="CHEBI:33019"/>
        <dbReference type="ChEBI" id="CHEBI:58095"/>
        <dbReference type="ChEBI" id="CHEBI:78442"/>
        <dbReference type="ChEBI" id="CHEBI:78531"/>
        <dbReference type="ChEBI" id="CHEBI:456215"/>
        <dbReference type="EC" id="6.1.1.20"/>
    </reaction>
</comment>
<comment type="cofactor">
    <cofactor evidence="1">
        <name>Mg(2+)</name>
        <dbReference type="ChEBI" id="CHEBI:18420"/>
    </cofactor>
</comment>
<comment type="subunit">
    <text evidence="1">Tetramer of two alpha and two beta subunits.</text>
</comment>
<comment type="subcellular location">
    <subcellularLocation>
        <location evidence="1">Cytoplasm</location>
    </subcellularLocation>
</comment>
<comment type="similarity">
    <text evidence="1">Belongs to the phenylalanyl-tRNA synthetase beta subunit family. Type 2 subfamily.</text>
</comment>
<proteinExistence type="inferred from homology"/>
<accession>C5A5Z0</accession>